<name>MNTR_ECO57</name>
<evidence type="ECO:0000250" key="1"/>
<evidence type="ECO:0000255" key="2">
    <source>
        <dbReference type="PROSITE-ProRule" id="PRU00296"/>
    </source>
</evidence>
<evidence type="ECO:0000305" key="3"/>
<gene>
    <name type="primary">mntR</name>
    <name type="ordered locus">Z1039</name>
    <name type="ordered locus">ECs0894</name>
</gene>
<proteinExistence type="inferred from homology"/>
<sequence>MSRRAGTPTAKKVTQLVNEEEHVEGFRQVREAHRRELIDDYVELISDLIREVGEARQVDMAARLGVSQPTVAKMLKRLATMGLIEMIPWRGVFLTAEGEKLAQESRERHQIVENFLLVLGVSPEIARRDAEGMEHHVSEETLDAFRLFTQKHGAK</sequence>
<organism>
    <name type="scientific">Escherichia coli O157:H7</name>
    <dbReference type="NCBI Taxonomy" id="83334"/>
    <lineage>
        <taxon>Bacteria</taxon>
        <taxon>Pseudomonadati</taxon>
        <taxon>Pseudomonadota</taxon>
        <taxon>Gammaproteobacteria</taxon>
        <taxon>Enterobacterales</taxon>
        <taxon>Enterobacteriaceae</taxon>
        <taxon>Escherichia</taxon>
    </lineage>
</organism>
<reference key="1">
    <citation type="journal article" date="2001" name="Nature">
        <title>Genome sequence of enterohaemorrhagic Escherichia coli O157:H7.</title>
        <authorList>
            <person name="Perna N.T."/>
            <person name="Plunkett G. III"/>
            <person name="Burland V."/>
            <person name="Mau B."/>
            <person name="Glasner J.D."/>
            <person name="Rose D.J."/>
            <person name="Mayhew G.F."/>
            <person name="Evans P.S."/>
            <person name="Gregor J."/>
            <person name="Kirkpatrick H.A."/>
            <person name="Posfai G."/>
            <person name="Hackett J."/>
            <person name="Klink S."/>
            <person name="Boutin A."/>
            <person name="Shao Y."/>
            <person name="Miller L."/>
            <person name="Grotbeck E.J."/>
            <person name="Davis N.W."/>
            <person name="Lim A."/>
            <person name="Dimalanta E.T."/>
            <person name="Potamousis K."/>
            <person name="Apodaca J."/>
            <person name="Anantharaman T.S."/>
            <person name="Lin J."/>
            <person name="Yen G."/>
            <person name="Schwartz D.C."/>
            <person name="Welch R.A."/>
            <person name="Blattner F.R."/>
        </authorList>
    </citation>
    <scope>NUCLEOTIDE SEQUENCE [LARGE SCALE GENOMIC DNA]</scope>
    <source>
        <strain>O157:H7 / EDL933 / ATCC 700927 / EHEC</strain>
    </source>
</reference>
<reference key="2">
    <citation type="journal article" date="2001" name="DNA Res.">
        <title>Complete genome sequence of enterohemorrhagic Escherichia coli O157:H7 and genomic comparison with a laboratory strain K-12.</title>
        <authorList>
            <person name="Hayashi T."/>
            <person name="Makino K."/>
            <person name="Ohnishi M."/>
            <person name="Kurokawa K."/>
            <person name="Ishii K."/>
            <person name="Yokoyama K."/>
            <person name="Han C.-G."/>
            <person name="Ohtsubo E."/>
            <person name="Nakayama K."/>
            <person name="Murata T."/>
            <person name="Tanaka M."/>
            <person name="Tobe T."/>
            <person name="Iida T."/>
            <person name="Takami H."/>
            <person name="Honda T."/>
            <person name="Sasakawa C."/>
            <person name="Ogasawara N."/>
            <person name="Yasunaga T."/>
            <person name="Kuhara S."/>
            <person name="Shiba T."/>
            <person name="Hattori M."/>
            <person name="Shinagawa H."/>
        </authorList>
    </citation>
    <scope>NUCLEOTIDE SEQUENCE [LARGE SCALE GENOMIC DNA]</scope>
    <source>
        <strain>O157:H7 / Sakai / RIMD 0509952 / EHEC</strain>
    </source>
</reference>
<feature type="chain" id="PRO_0000201111" description="Transcriptional regulator MntR">
    <location>
        <begin position="1"/>
        <end position="155"/>
    </location>
</feature>
<feature type="domain" description="HTH dtxR-type" evidence="2">
    <location>
        <begin position="34"/>
        <end position="95"/>
    </location>
</feature>
<protein>
    <recommendedName>
        <fullName>Transcriptional regulator MntR</fullName>
    </recommendedName>
    <alternativeName>
        <fullName>Manganese transport regulator</fullName>
    </alternativeName>
</protein>
<comment type="function">
    <text evidence="1">In the presence of manganese, represses expression of mntH and mntS. Up-regulates expression of mntP (By similarity).</text>
</comment>
<comment type="subunit">
    <text evidence="1">Homodimer.</text>
</comment>
<comment type="subcellular location">
    <subcellularLocation>
        <location evidence="1">Cytoplasm</location>
    </subcellularLocation>
</comment>
<comment type="domain">
    <text evidence="1">It contains an N-terminal DNA-binding domain and a metal-binding domain.</text>
</comment>
<comment type="similarity">
    <text evidence="3">Belongs to the DtxR/MntR family.</text>
</comment>
<keyword id="KW-0010">Activator</keyword>
<keyword id="KW-0963">Cytoplasm</keyword>
<keyword id="KW-0238">DNA-binding</keyword>
<keyword id="KW-0464">Manganese</keyword>
<keyword id="KW-1185">Reference proteome</keyword>
<keyword id="KW-0678">Repressor</keyword>
<keyword id="KW-0804">Transcription</keyword>
<keyword id="KW-0805">Transcription regulation</keyword>
<accession>Q8X7U4</accession>
<dbReference type="EMBL" id="AE005174">
    <property type="protein sequence ID" value="AAG55189.1"/>
    <property type="molecule type" value="Genomic_DNA"/>
</dbReference>
<dbReference type="EMBL" id="BA000007">
    <property type="protein sequence ID" value="BAB34317.1"/>
    <property type="molecule type" value="Genomic_DNA"/>
</dbReference>
<dbReference type="PIR" id="A85591">
    <property type="entry name" value="A85591"/>
</dbReference>
<dbReference type="PIR" id="F90740">
    <property type="entry name" value="F90740"/>
</dbReference>
<dbReference type="RefSeq" id="NP_308921.1">
    <property type="nucleotide sequence ID" value="NC_002695.1"/>
</dbReference>
<dbReference type="RefSeq" id="WP_000091008.1">
    <property type="nucleotide sequence ID" value="NZ_VOAI01000006.1"/>
</dbReference>
<dbReference type="SMR" id="Q8X7U4"/>
<dbReference type="STRING" id="155864.Z1039"/>
<dbReference type="GeneID" id="917636"/>
<dbReference type="KEGG" id="ece:Z1039"/>
<dbReference type="KEGG" id="ecs:ECs_0894"/>
<dbReference type="PATRIC" id="fig|386585.9.peg.1009"/>
<dbReference type="eggNOG" id="COG1321">
    <property type="taxonomic scope" value="Bacteria"/>
</dbReference>
<dbReference type="HOGENOM" id="CLU_069532_2_0_6"/>
<dbReference type="OMA" id="SWDAIDR"/>
<dbReference type="Proteomes" id="UP000000558">
    <property type="component" value="Chromosome"/>
</dbReference>
<dbReference type="Proteomes" id="UP000002519">
    <property type="component" value="Chromosome"/>
</dbReference>
<dbReference type="GO" id="GO:0005737">
    <property type="term" value="C:cytoplasm"/>
    <property type="evidence" value="ECO:0007669"/>
    <property type="project" value="UniProtKB-SubCell"/>
</dbReference>
<dbReference type="GO" id="GO:0003677">
    <property type="term" value="F:DNA binding"/>
    <property type="evidence" value="ECO:0007669"/>
    <property type="project" value="UniProtKB-KW"/>
</dbReference>
<dbReference type="GO" id="GO:0003700">
    <property type="term" value="F:DNA-binding transcription factor activity"/>
    <property type="evidence" value="ECO:0007669"/>
    <property type="project" value="InterPro"/>
</dbReference>
<dbReference type="GO" id="GO:0046983">
    <property type="term" value="F:protein dimerization activity"/>
    <property type="evidence" value="ECO:0007669"/>
    <property type="project" value="InterPro"/>
</dbReference>
<dbReference type="GO" id="GO:0046914">
    <property type="term" value="F:transition metal ion binding"/>
    <property type="evidence" value="ECO:0007669"/>
    <property type="project" value="InterPro"/>
</dbReference>
<dbReference type="FunFam" id="1.10.10.10:FF:000108">
    <property type="entry name" value="Mn-dependent transcriptional regulator MntR"/>
    <property type="match status" value="1"/>
</dbReference>
<dbReference type="FunFam" id="1.10.60.10:FF:000002">
    <property type="entry name" value="Mn-dependent transcriptional regulator MntR"/>
    <property type="match status" value="1"/>
</dbReference>
<dbReference type="Gene3D" id="1.10.60.10">
    <property type="entry name" value="Iron dependent repressor, metal binding and dimerisation domain"/>
    <property type="match status" value="1"/>
</dbReference>
<dbReference type="Gene3D" id="1.10.10.10">
    <property type="entry name" value="Winged helix-like DNA-binding domain superfamily/Winged helix DNA-binding domain"/>
    <property type="match status" value="1"/>
</dbReference>
<dbReference type="InterPro" id="IPR050536">
    <property type="entry name" value="DtxR_MntR_Metal-Reg"/>
</dbReference>
<dbReference type="InterPro" id="IPR001367">
    <property type="entry name" value="Fe_dep_repressor"/>
</dbReference>
<dbReference type="InterPro" id="IPR036421">
    <property type="entry name" value="Fe_dep_repressor_sf"/>
</dbReference>
<dbReference type="InterPro" id="IPR022687">
    <property type="entry name" value="HTH_DTXR"/>
</dbReference>
<dbReference type="InterPro" id="IPR022689">
    <property type="entry name" value="Iron_dep_repressor"/>
</dbReference>
<dbReference type="InterPro" id="IPR036388">
    <property type="entry name" value="WH-like_DNA-bd_sf"/>
</dbReference>
<dbReference type="InterPro" id="IPR036390">
    <property type="entry name" value="WH_DNA-bd_sf"/>
</dbReference>
<dbReference type="NCBIfam" id="NF008273">
    <property type="entry name" value="PRK11050.1"/>
    <property type="match status" value="1"/>
</dbReference>
<dbReference type="PANTHER" id="PTHR33238">
    <property type="entry name" value="IRON (METAL) DEPENDENT REPRESSOR, DTXR FAMILY"/>
    <property type="match status" value="1"/>
</dbReference>
<dbReference type="PANTHER" id="PTHR33238:SF11">
    <property type="entry name" value="TRANSCRIPTIONAL REGULATOR MNTR"/>
    <property type="match status" value="1"/>
</dbReference>
<dbReference type="Pfam" id="PF02742">
    <property type="entry name" value="Fe_dep_repr_C"/>
    <property type="match status" value="1"/>
</dbReference>
<dbReference type="Pfam" id="PF01325">
    <property type="entry name" value="Fe_dep_repress"/>
    <property type="match status" value="1"/>
</dbReference>
<dbReference type="SMART" id="SM00529">
    <property type="entry name" value="HTH_DTXR"/>
    <property type="match status" value="1"/>
</dbReference>
<dbReference type="SUPFAM" id="SSF47979">
    <property type="entry name" value="Iron-dependent repressor protein, dimerization domain"/>
    <property type="match status" value="1"/>
</dbReference>
<dbReference type="SUPFAM" id="SSF46785">
    <property type="entry name" value="Winged helix' DNA-binding domain"/>
    <property type="match status" value="1"/>
</dbReference>
<dbReference type="PROSITE" id="PS50944">
    <property type="entry name" value="HTH_DTXR"/>
    <property type="match status" value="1"/>
</dbReference>